<comment type="function">
    <text evidence="1">Binds 16S rRNA, required for the assembly of 30S particles and may also be responsible for determining the conformation of the 16S rRNA at the A site.</text>
</comment>
<comment type="cofactor">
    <cofactor evidence="1">
        <name>Zn(2+)</name>
        <dbReference type="ChEBI" id="CHEBI:29105"/>
    </cofactor>
    <text evidence="1">Binds 1 zinc ion per subunit.</text>
</comment>
<comment type="subunit">
    <text evidence="1">Part of the 30S ribosomal subunit. Contacts proteins S3 and S10.</text>
</comment>
<comment type="similarity">
    <text evidence="1">Belongs to the universal ribosomal protein uS14 family. Zinc-binding uS14 subfamily.</text>
</comment>
<reference key="1">
    <citation type="journal article" date="2000" name="Nature">
        <title>The genome sequence of the food-borne pathogen Campylobacter jejuni reveals hypervariable sequences.</title>
        <authorList>
            <person name="Parkhill J."/>
            <person name="Wren B.W."/>
            <person name="Mungall K.L."/>
            <person name="Ketley J.M."/>
            <person name="Churcher C.M."/>
            <person name="Basham D."/>
            <person name="Chillingworth T."/>
            <person name="Davies R.M."/>
            <person name="Feltwell T."/>
            <person name="Holroyd S."/>
            <person name="Jagels K."/>
            <person name="Karlyshev A.V."/>
            <person name="Moule S."/>
            <person name="Pallen M.J."/>
            <person name="Penn C.W."/>
            <person name="Quail M.A."/>
            <person name="Rajandream M.A."/>
            <person name="Rutherford K.M."/>
            <person name="van Vliet A.H.M."/>
            <person name="Whitehead S."/>
            <person name="Barrell B.G."/>
        </authorList>
    </citation>
    <scope>NUCLEOTIDE SEQUENCE [LARGE SCALE GENOMIC DNA]</scope>
    <source>
        <strain>ATCC 700819 / NCTC 11168</strain>
    </source>
</reference>
<keyword id="KW-0479">Metal-binding</keyword>
<keyword id="KW-1185">Reference proteome</keyword>
<keyword id="KW-0687">Ribonucleoprotein</keyword>
<keyword id="KW-0689">Ribosomal protein</keyword>
<keyword id="KW-0694">RNA-binding</keyword>
<keyword id="KW-0699">rRNA-binding</keyword>
<keyword id="KW-0862">Zinc</keyword>
<gene>
    <name evidence="1" type="primary">rpsZ</name>
    <name evidence="1" type="synonym">rpsN</name>
    <name type="ordered locus">Cj1694c</name>
</gene>
<sequence>MAKKSMIAKAARKPKFKVRAYTRCQICGRPHSVYRDFGICRVCLRKMGNEGLIPGLKKASW</sequence>
<dbReference type="EMBL" id="AL111168">
    <property type="protein sequence ID" value="CAL35788.1"/>
    <property type="molecule type" value="Genomic_DNA"/>
</dbReference>
<dbReference type="PIR" id="B81267">
    <property type="entry name" value="B81267"/>
</dbReference>
<dbReference type="RefSeq" id="WP_002851478.1">
    <property type="nucleotide sequence ID" value="NZ_SZUC01000002.1"/>
</dbReference>
<dbReference type="RefSeq" id="YP_002345060.1">
    <property type="nucleotide sequence ID" value="NC_002163.1"/>
</dbReference>
<dbReference type="SMR" id="Q9PLY4"/>
<dbReference type="IntAct" id="Q9PLY4">
    <property type="interactions" value="6"/>
</dbReference>
<dbReference type="STRING" id="192222.Cj1694c"/>
<dbReference type="PaxDb" id="192222-Cj1694c"/>
<dbReference type="EnsemblBacteria" id="CAL35788">
    <property type="protein sequence ID" value="CAL35788"/>
    <property type="gene ID" value="Cj1694c"/>
</dbReference>
<dbReference type="GeneID" id="905968"/>
<dbReference type="KEGG" id="cje:Cj1694c"/>
<dbReference type="PATRIC" id="fig|192222.6.peg.1668"/>
<dbReference type="eggNOG" id="COG0199">
    <property type="taxonomic scope" value="Bacteria"/>
</dbReference>
<dbReference type="HOGENOM" id="CLU_139869_3_0_7"/>
<dbReference type="OrthoDB" id="9810484at2"/>
<dbReference type="Proteomes" id="UP000000799">
    <property type="component" value="Chromosome"/>
</dbReference>
<dbReference type="GO" id="GO:0005737">
    <property type="term" value="C:cytoplasm"/>
    <property type="evidence" value="ECO:0007669"/>
    <property type="project" value="UniProtKB-ARBA"/>
</dbReference>
<dbReference type="GO" id="GO:0015935">
    <property type="term" value="C:small ribosomal subunit"/>
    <property type="evidence" value="ECO:0007669"/>
    <property type="project" value="TreeGrafter"/>
</dbReference>
<dbReference type="GO" id="GO:0019843">
    <property type="term" value="F:rRNA binding"/>
    <property type="evidence" value="ECO:0007669"/>
    <property type="project" value="UniProtKB-UniRule"/>
</dbReference>
<dbReference type="GO" id="GO:0003735">
    <property type="term" value="F:structural constituent of ribosome"/>
    <property type="evidence" value="ECO:0007669"/>
    <property type="project" value="InterPro"/>
</dbReference>
<dbReference type="GO" id="GO:0008270">
    <property type="term" value="F:zinc ion binding"/>
    <property type="evidence" value="ECO:0007669"/>
    <property type="project" value="UniProtKB-UniRule"/>
</dbReference>
<dbReference type="GO" id="GO:0006412">
    <property type="term" value="P:translation"/>
    <property type="evidence" value="ECO:0007669"/>
    <property type="project" value="UniProtKB-UniRule"/>
</dbReference>
<dbReference type="FunFam" id="4.10.830.10:FF:000001">
    <property type="entry name" value="30S ribosomal protein S14 type Z"/>
    <property type="match status" value="1"/>
</dbReference>
<dbReference type="Gene3D" id="4.10.830.10">
    <property type="entry name" value="30s Ribosomal Protein S14, Chain N"/>
    <property type="match status" value="1"/>
</dbReference>
<dbReference type="HAMAP" id="MF_01364_B">
    <property type="entry name" value="Ribosomal_uS14_2_B"/>
    <property type="match status" value="1"/>
</dbReference>
<dbReference type="InterPro" id="IPR001209">
    <property type="entry name" value="Ribosomal_uS14"/>
</dbReference>
<dbReference type="InterPro" id="IPR023053">
    <property type="entry name" value="Ribosomal_uS14_bact"/>
</dbReference>
<dbReference type="InterPro" id="IPR018271">
    <property type="entry name" value="Ribosomal_uS14_CS"/>
</dbReference>
<dbReference type="InterPro" id="IPR043140">
    <property type="entry name" value="Ribosomal_uS14_sf"/>
</dbReference>
<dbReference type="NCBIfam" id="NF005974">
    <property type="entry name" value="PRK08061.1"/>
    <property type="match status" value="1"/>
</dbReference>
<dbReference type="PANTHER" id="PTHR19836">
    <property type="entry name" value="30S RIBOSOMAL PROTEIN S14"/>
    <property type="match status" value="1"/>
</dbReference>
<dbReference type="PANTHER" id="PTHR19836:SF19">
    <property type="entry name" value="SMALL RIBOSOMAL SUBUNIT PROTEIN US14M"/>
    <property type="match status" value="1"/>
</dbReference>
<dbReference type="Pfam" id="PF00253">
    <property type="entry name" value="Ribosomal_S14"/>
    <property type="match status" value="1"/>
</dbReference>
<dbReference type="SUPFAM" id="SSF57716">
    <property type="entry name" value="Glucocorticoid receptor-like (DNA-binding domain)"/>
    <property type="match status" value="1"/>
</dbReference>
<dbReference type="PROSITE" id="PS00527">
    <property type="entry name" value="RIBOSOMAL_S14"/>
    <property type="match status" value="1"/>
</dbReference>
<proteinExistence type="inferred from homology"/>
<organism>
    <name type="scientific">Campylobacter jejuni subsp. jejuni serotype O:2 (strain ATCC 700819 / NCTC 11168)</name>
    <dbReference type="NCBI Taxonomy" id="192222"/>
    <lineage>
        <taxon>Bacteria</taxon>
        <taxon>Pseudomonadati</taxon>
        <taxon>Campylobacterota</taxon>
        <taxon>Epsilonproteobacteria</taxon>
        <taxon>Campylobacterales</taxon>
        <taxon>Campylobacteraceae</taxon>
        <taxon>Campylobacter</taxon>
    </lineage>
</organism>
<protein>
    <recommendedName>
        <fullName evidence="1">Small ribosomal subunit protein uS14</fullName>
    </recommendedName>
    <alternativeName>
        <fullName evidence="2">30S ribosomal protein S14 type Z</fullName>
    </alternativeName>
</protein>
<evidence type="ECO:0000255" key="1">
    <source>
        <dbReference type="HAMAP-Rule" id="MF_01364"/>
    </source>
</evidence>
<evidence type="ECO:0000305" key="2"/>
<name>RS14Z_CAMJE</name>
<feature type="chain" id="PRO_0000130881" description="Small ribosomal subunit protein uS14">
    <location>
        <begin position="1"/>
        <end position="61"/>
    </location>
</feature>
<feature type="binding site" evidence="1">
    <location>
        <position position="24"/>
    </location>
    <ligand>
        <name>Zn(2+)</name>
        <dbReference type="ChEBI" id="CHEBI:29105"/>
    </ligand>
</feature>
<feature type="binding site" evidence="1">
    <location>
        <position position="27"/>
    </location>
    <ligand>
        <name>Zn(2+)</name>
        <dbReference type="ChEBI" id="CHEBI:29105"/>
    </ligand>
</feature>
<feature type="binding site" evidence="1">
    <location>
        <position position="40"/>
    </location>
    <ligand>
        <name>Zn(2+)</name>
        <dbReference type="ChEBI" id="CHEBI:29105"/>
    </ligand>
</feature>
<feature type="binding site" evidence="1">
    <location>
        <position position="43"/>
    </location>
    <ligand>
        <name>Zn(2+)</name>
        <dbReference type="ChEBI" id="CHEBI:29105"/>
    </ligand>
</feature>
<accession>Q9PLY4</accession>
<accession>Q0P7T7</accession>